<keyword id="KW-0997">Cell inner membrane</keyword>
<keyword id="KW-1003">Cell membrane</keyword>
<keyword id="KW-0406">Ion transport</keyword>
<keyword id="KW-0472">Membrane</keyword>
<keyword id="KW-0630">Potassium</keyword>
<keyword id="KW-0633">Potassium transport</keyword>
<keyword id="KW-1185">Reference proteome</keyword>
<keyword id="KW-0769">Symport</keyword>
<keyword id="KW-0812">Transmembrane</keyword>
<keyword id="KW-1133">Transmembrane helix</keyword>
<keyword id="KW-0813">Transport</keyword>
<evidence type="ECO:0000255" key="1">
    <source>
        <dbReference type="HAMAP-Rule" id="MF_01522"/>
    </source>
</evidence>
<sequence length="620" mass="67628">MSQHKNSVGLLVSAVGVVFGDIGTSPLYAMKETFAGHHPIMVSPENIFGVLSLVFWTVMLLVTVKYVILIMRADNHGEGGSLALLALVTELTRGRRVHYPLMLLGVIAAALFYGDSMITPAISVLSAVEGLEVVTPDLKAYVVPITALVLTGLFAIQSRGTALVGRLFGPVMCLWFVTLALLGIANIVRAPEVLEAISPTFAIEFVIRHPLMSFYALGTVVLAVTGGEALYTDMGHFGRFPIRLGWFSLVLPALLLNYFGQGALLIADPAAIQNPFFRMGPEWMVMPMVALATLATVIASQAVISGAFSVARQAIQLGLLPRMTIVHTSGEEAGQIYVPFTNWTLYFAVMALVIGFQSSSNLAAAYGIAVTGTMMIDTILVSFVMALLWRWNMALVIVVAGTLLLVDFAYFAANIIKVAQGGWFPLFIGFISFTVLTTWRRGRALVRKQLKKQAVPLDVVLRALGPNVSRARGTAVFLTAATDGVPPALLHNLKHNQTVHQRVVLATVTTAETPYVPDSERVHMTDIGDGFHRLIIRYGFMQTPDIPAALTLCKQFGHEFNMMSTSFFLSRETFVPSLNPGMALWRERLFTFMTLNATRATTFFKIPTDRVVELGTQLEI</sequence>
<reference key="1">
    <citation type="submission" date="2006-01" db="EMBL/GenBank/DDBJ databases">
        <title>Complete sequence of Rhodopseudomonas palustris HaA2.</title>
        <authorList>
            <consortium name="US DOE Joint Genome Institute"/>
            <person name="Copeland A."/>
            <person name="Lucas S."/>
            <person name="Lapidus A."/>
            <person name="Barry K."/>
            <person name="Detter J.C."/>
            <person name="Glavina T."/>
            <person name="Hammon N."/>
            <person name="Israni S."/>
            <person name="Pitluck S."/>
            <person name="Chain P."/>
            <person name="Malfatti S."/>
            <person name="Shin M."/>
            <person name="Vergez L."/>
            <person name="Schmutz J."/>
            <person name="Larimer F."/>
            <person name="Land M."/>
            <person name="Hauser L."/>
            <person name="Pelletier D.A."/>
            <person name="Kyrpides N."/>
            <person name="Anderson I."/>
            <person name="Oda Y."/>
            <person name="Harwood C.S."/>
            <person name="Richardson P."/>
        </authorList>
    </citation>
    <scope>NUCLEOTIDE SEQUENCE [LARGE SCALE GENOMIC DNA]</scope>
    <source>
        <strain>HaA2</strain>
    </source>
</reference>
<comment type="function">
    <text evidence="1">Transport of potassium into the cell. Likely operates as a K(+):H(+) symporter.</text>
</comment>
<comment type="catalytic activity">
    <reaction evidence="1">
        <text>K(+)(in) + H(+)(in) = K(+)(out) + H(+)(out)</text>
        <dbReference type="Rhea" id="RHEA:28490"/>
        <dbReference type="ChEBI" id="CHEBI:15378"/>
        <dbReference type="ChEBI" id="CHEBI:29103"/>
    </reaction>
    <physiologicalReaction direction="right-to-left" evidence="1">
        <dbReference type="Rhea" id="RHEA:28492"/>
    </physiologicalReaction>
</comment>
<comment type="subcellular location">
    <subcellularLocation>
        <location evidence="1">Cell inner membrane</location>
        <topology evidence="1">Multi-pass membrane protein</topology>
    </subcellularLocation>
</comment>
<comment type="similarity">
    <text evidence="1">Belongs to the HAK/KUP transporter (TC 2.A.72) family.</text>
</comment>
<proteinExistence type="inferred from homology"/>
<accession>Q2IX43</accession>
<dbReference type="EMBL" id="CP000250">
    <property type="protein sequence ID" value="ABD07217.1"/>
    <property type="molecule type" value="Genomic_DNA"/>
</dbReference>
<dbReference type="RefSeq" id="WP_011441402.1">
    <property type="nucleotide sequence ID" value="NC_007778.1"/>
</dbReference>
<dbReference type="STRING" id="316058.RPB_2512"/>
<dbReference type="KEGG" id="rpb:RPB_2512"/>
<dbReference type="eggNOG" id="COG3158">
    <property type="taxonomic scope" value="Bacteria"/>
</dbReference>
<dbReference type="HOGENOM" id="CLU_008142_4_2_5"/>
<dbReference type="OrthoDB" id="9805577at2"/>
<dbReference type="Proteomes" id="UP000008809">
    <property type="component" value="Chromosome"/>
</dbReference>
<dbReference type="GO" id="GO:0005886">
    <property type="term" value="C:plasma membrane"/>
    <property type="evidence" value="ECO:0007669"/>
    <property type="project" value="UniProtKB-SubCell"/>
</dbReference>
<dbReference type="GO" id="GO:0015079">
    <property type="term" value="F:potassium ion transmembrane transporter activity"/>
    <property type="evidence" value="ECO:0007669"/>
    <property type="project" value="UniProtKB-UniRule"/>
</dbReference>
<dbReference type="GO" id="GO:0015293">
    <property type="term" value="F:symporter activity"/>
    <property type="evidence" value="ECO:0007669"/>
    <property type="project" value="UniProtKB-UniRule"/>
</dbReference>
<dbReference type="HAMAP" id="MF_01522">
    <property type="entry name" value="Kup"/>
    <property type="match status" value="1"/>
</dbReference>
<dbReference type="InterPro" id="IPR003855">
    <property type="entry name" value="K+_transporter"/>
</dbReference>
<dbReference type="InterPro" id="IPR053952">
    <property type="entry name" value="K_trans_C"/>
</dbReference>
<dbReference type="InterPro" id="IPR053951">
    <property type="entry name" value="K_trans_N"/>
</dbReference>
<dbReference type="InterPro" id="IPR023051">
    <property type="entry name" value="Kup"/>
</dbReference>
<dbReference type="PANTHER" id="PTHR30540:SF79">
    <property type="entry name" value="LOW AFFINITY POTASSIUM TRANSPORT SYSTEM PROTEIN KUP"/>
    <property type="match status" value="1"/>
</dbReference>
<dbReference type="PANTHER" id="PTHR30540">
    <property type="entry name" value="OSMOTIC STRESS POTASSIUM TRANSPORTER"/>
    <property type="match status" value="1"/>
</dbReference>
<dbReference type="Pfam" id="PF02705">
    <property type="entry name" value="K_trans"/>
    <property type="match status" value="1"/>
</dbReference>
<dbReference type="Pfam" id="PF22776">
    <property type="entry name" value="K_trans_C"/>
    <property type="match status" value="1"/>
</dbReference>
<protein>
    <recommendedName>
        <fullName evidence="1">Probable potassium transport system protein Kup</fullName>
    </recommendedName>
</protein>
<name>KUP_RHOP2</name>
<feature type="chain" id="PRO_5000107374" description="Probable potassium transport system protein Kup">
    <location>
        <begin position="1"/>
        <end position="620"/>
    </location>
</feature>
<feature type="transmembrane region" description="Helical" evidence="1">
    <location>
        <begin position="8"/>
        <end position="28"/>
    </location>
</feature>
<feature type="transmembrane region" description="Helical" evidence="1">
    <location>
        <begin position="50"/>
        <end position="70"/>
    </location>
</feature>
<feature type="transmembrane region" description="Helical" evidence="1">
    <location>
        <begin position="102"/>
        <end position="122"/>
    </location>
</feature>
<feature type="transmembrane region" description="Helical" evidence="1">
    <location>
        <begin position="136"/>
        <end position="156"/>
    </location>
</feature>
<feature type="transmembrane region" description="Helical" evidence="1">
    <location>
        <begin position="168"/>
        <end position="188"/>
    </location>
</feature>
<feature type="transmembrane region" description="Helical" evidence="1">
    <location>
        <begin position="211"/>
        <end position="231"/>
    </location>
</feature>
<feature type="transmembrane region" description="Helical" evidence="1">
    <location>
        <begin position="246"/>
        <end position="266"/>
    </location>
</feature>
<feature type="transmembrane region" description="Helical" evidence="1">
    <location>
        <begin position="284"/>
        <end position="304"/>
    </location>
</feature>
<feature type="transmembrane region" description="Helical" evidence="1">
    <location>
        <begin position="336"/>
        <end position="356"/>
    </location>
</feature>
<feature type="transmembrane region" description="Helical" evidence="1">
    <location>
        <begin position="368"/>
        <end position="388"/>
    </location>
</feature>
<feature type="transmembrane region" description="Helical" evidence="1">
    <location>
        <begin position="393"/>
        <end position="413"/>
    </location>
</feature>
<feature type="transmembrane region" description="Helical" evidence="1">
    <location>
        <begin position="415"/>
        <end position="435"/>
    </location>
</feature>
<organism>
    <name type="scientific">Rhodopseudomonas palustris (strain HaA2)</name>
    <dbReference type="NCBI Taxonomy" id="316058"/>
    <lineage>
        <taxon>Bacteria</taxon>
        <taxon>Pseudomonadati</taxon>
        <taxon>Pseudomonadota</taxon>
        <taxon>Alphaproteobacteria</taxon>
        <taxon>Hyphomicrobiales</taxon>
        <taxon>Nitrobacteraceae</taxon>
        <taxon>Rhodopseudomonas</taxon>
    </lineage>
</organism>
<gene>
    <name evidence="1" type="primary">kup</name>
    <name type="ordered locus">RPB_2512</name>
</gene>